<accession>Q63ZR7</accession>
<proteinExistence type="evidence at transcript level"/>
<comment type="function">
    <text evidence="1">May play a role in mitochondrial dynamics by controlling mitochondrial membrane fission.</text>
</comment>
<comment type="subcellular location">
    <subcellularLocation>
        <location evidence="1">Mitochondrion outer membrane</location>
        <topology evidence="2">Multi-pass membrane protein</topology>
    </subcellularLocation>
</comment>
<comment type="similarity">
    <text evidence="4">Belongs to the mitochondrial carrier (TC 2.A.29) family.</text>
</comment>
<evidence type="ECO:0000250" key="1">
    <source>
        <dbReference type="UniProtKB" id="Q96AG3"/>
    </source>
</evidence>
<evidence type="ECO:0000255" key="2"/>
<evidence type="ECO:0000256" key="3">
    <source>
        <dbReference type="SAM" id="MobiDB-lite"/>
    </source>
</evidence>
<evidence type="ECO:0000305" key="4"/>
<feature type="chain" id="PRO_0000291834" description="Solute carrier family 25 member 46-B">
    <location>
        <begin position="1"/>
        <end position="414"/>
    </location>
</feature>
<feature type="transmembrane region" description="Helical; Name=1" evidence="2">
    <location>
        <begin position="99"/>
        <end position="119"/>
    </location>
</feature>
<feature type="transmembrane region" description="Helical; Name=2" evidence="2">
    <location>
        <begin position="159"/>
        <end position="179"/>
    </location>
</feature>
<feature type="transmembrane region" description="Helical; Name=3" evidence="2">
    <location>
        <begin position="198"/>
        <end position="218"/>
    </location>
</feature>
<feature type="transmembrane region" description="Helical; Name=4" evidence="2">
    <location>
        <begin position="254"/>
        <end position="274"/>
    </location>
</feature>
<feature type="transmembrane region" description="Helical; Name=5" evidence="2">
    <location>
        <begin position="310"/>
        <end position="330"/>
    </location>
</feature>
<feature type="transmembrane region" description="Helical; Name=6" evidence="2">
    <location>
        <begin position="379"/>
        <end position="399"/>
    </location>
</feature>
<feature type="repeat" description="Solcar 1">
    <location>
        <begin position="92"/>
        <end position="183"/>
    </location>
</feature>
<feature type="repeat" description="Solcar 2">
    <location>
        <begin position="307"/>
        <end position="412"/>
    </location>
</feature>
<feature type="region of interest" description="Disordered" evidence="3">
    <location>
        <begin position="1"/>
        <end position="89"/>
    </location>
</feature>
<feature type="compositionally biased region" description="Basic and acidic residues" evidence="3">
    <location>
        <begin position="1"/>
        <end position="13"/>
    </location>
</feature>
<feature type="compositionally biased region" description="Polar residues" evidence="3">
    <location>
        <begin position="29"/>
        <end position="50"/>
    </location>
</feature>
<name>S246B_XENLA</name>
<reference key="1">
    <citation type="submission" date="2004-09" db="EMBL/GenBank/DDBJ databases">
        <authorList>
            <consortium name="NIH - Xenopus Gene Collection (XGC) project"/>
        </authorList>
    </citation>
    <scope>NUCLEOTIDE SEQUENCE [LARGE SCALE MRNA]</scope>
    <source>
        <tissue>Ovary</tissue>
    </source>
</reference>
<organism>
    <name type="scientific">Xenopus laevis</name>
    <name type="common">African clawed frog</name>
    <dbReference type="NCBI Taxonomy" id="8355"/>
    <lineage>
        <taxon>Eukaryota</taxon>
        <taxon>Metazoa</taxon>
        <taxon>Chordata</taxon>
        <taxon>Craniata</taxon>
        <taxon>Vertebrata</taxon>
        <taxon>Euteleostomi</taxon>
        <taxon>Amphibia</taxon>
        <taxon>Batrachia</taxon>
        <taxon>Anura</taxon>
        <taxon>Pipoidea</taxon>
        <taxon>Pipidae</taxon>
        <taxon>Xenopodinae</taxon>
        <taxon>Xenopus</taxon>
        <taxon>Xenopus</taxon>
    </lineage>
</organism>
<protein>
    <recommendedName>
        <fullName>Solute carrier family 25 member 46-B</fullName>
    </recommendedName>
</protein>
<dbReference type="EMBL" id="BC082843">
    <property type="protein sequence ID" value="AAH82843.1"/>
    <property type="molecule type" value="mRNA"/>
</dbReference>
<dbReference type="RefSeq" id="NP_001088052.1">
    <property type="nucleotide sequence ID" value="NM_001094583.1"/>
</dbReference>
<dbReference type="DNASU" id="494746"/>
<dbReference type="GeneID" id="494746"/>
<dbReference type="KEGG" id="xla:494746"/>
<dbReference type="AGR" id="Xenbase:XB-GENE-5804011"/>
<dbReference type="CTD" id="494746"/>
<dbReference type="Xenbase" id="XB-GENE-5804011">
    <property type="gene designation" value="slc25a46.L"/>
</dbReference>
<dbReference type="OrthoDB" id="2403262at2759"/>
<dbReference type="Proteomes" id="UP000186698">
    <property type="component" value="Chromosome 1L"/>
</dbReference>
<dbReference type="Bgee" id="494746">
    <property type="expression patterns" value="Expressed in oocyte and 5 other cell types or tissues"/>
</dbReference>
<dbReference type="GO" id="GO:0005741">
    <property type="term" value="C:mitochondrial outer membrane"/>
    <property type="evidence" value="ECO:0000250"/>
    <property type="project" value="UniProtKB"/>
</dbReference>
<dbReference type="GO" id="GO:0061564">
    <property type="term" value="P:axon development"/>
    <property type="evidence" value="ECO:0000318"/>
    <property type="project" value="GO_Central"/>
</dbReference>
<dbReference type="GO" id="GO:0000266">
    <property type="term" value="P:mitochondrial fission"/>
    <property type="evidence" value="ECO:0000250"/>
    <property type="project" value="UniProtKB"/>
</dbReference>
<dbReference type="GO" id="GO:0090149">
    <property type="term" value="P:mitochondrial membrane fission"/>
    <property type="evidence" value="ECO:0007669"/>
    <property type="project" value="InterPro"/>
</dbReference>
<dbReference type="FunFam" id="1.50.40.10:FF:000057">
    <property type="entry name" value="Solute carrier family 25 member 46"/>
    <property type="match status" value="1"/>
</dbReference>
<dbReference type="Gene3D" id="1.50.40.10">
    <property type="entry name" value="Mitochondrial carrier domain"/>
    <property type="match status" value="2"/>
</dbReference>
<dbReference type="InterPro" id="IPR018108">
    <property type="entry name" value="Mitochondrial_sb/sol_carrier"/>
</dbReference>
<dbReference type="InterPro" id="IPR023395">
    <property type="entry name" value="Mt_carrier_dom_sf"/>
</dbReference>
<dbReference type="InterPro" id="IPR039158">
    <property type="entry name" value="SLC25A46"/>
</dbReference>
<dbReference type="PANTHER" id="PTHR21252:SF2">
    <property type="entry name" value="MITOCHONDRIAL OUTER MEMBRANE PROTEIN SLC25A46"/>
    <property type="match status" value="1"/>
</dbReference>
<dbReference type="PANTHER" id="PTHR21252">
    <property type="entry name" value="TB1 PROTEIN-RELATED"/>
    <property type="match status" value="1"/>
</dbReference>
<dbReference type="Pfam" id="PF00153">
    <property type="entry name" value="Mito_carr"/>
    <property type="match status" value="2"/>
</dbReference>
<dbReference type="SUPFAM" id="SSF103506">
    <property type="entry name" value="Mitochondrial carrier"/>
    <property type="match status" value="1"/>
</dbReference>
<dbReference type="PROSITE" id="PS50920">
    <property type="entry name" value="SOLCAR"/>
    <property type="match status" value="2"/>
</dbReference>
<gene>
    <name type="primary">slc25a46-b</name>
</gene>
<sequence length="414" mass="45782">MQPRRPDRFDGLEYRGTSWGRGDGDVPPYQSSFPARSLSSSGDLSQQWVTSPPDIPGSRNLHWGEKSPQYGADSNAGPPAFGEENSGSSGEQVNRFAGFGIGLASLFTENVLAHPCIVLRRQCQVNYHAQNYQLSPFSIVNIMYNFTKTQGPRALWKGMGSTFIVQGISLGAEGMLSEFTHLPRELSHKWNLKQLGGHLLLKGLVYVIVTPFYSASLIETVQSEIIHDNPGILDCLKEGIGRVLNLGVPYSKRLLPLLVLTFPTVLHGILHYIISSTIQKCVLFFIKKRSPPQLPAEGSNAVQNKLEDYFPELLANFAASLCADVLLYPLETVMHRLHIQGTRTIIDNTDLGHEVVPINTQYEGLKDCINTIKREEGGLGFYKGFGAVVVQYTLHAIVLQITKIIYSSVVQTAR</sequence>
<keyword id="KW-0472">Membrane</keyword>
<keyword id="KW-0496">Mitochondrion</keyword>
<keyword id="KW-1000">Mitochondrion outer membrane</keyword>
<keyword id="KW-1185">Reference proteome</keyword>
<keyword id="KW-0677">Repeat</keyword>
<keyword id="KW-0812">Transmembrane</keyword>
<keyword id="KW-1133">Transmembrane helix</keyword>
<keyword id="KW-0813">Transport</keyword>